<feature type="chain" id="PRO_0000212923" description="Palmitoyltransferase akr1">
    <location>
        <begin position="1"/>
        <end position="737"/>
    </location>
</feature>
<feature type="topological domain" description="Cytoplasmic" evidence="2">
    <location>
        <begin position="1"/>
        <end position="314"/>
    </location>
</feature>
<feature type="transmembrane region" description="Helical" evidence="2">
    <location>
        <begin position="315"/>
        <end position="335"/>
    </location>
</feature>
<feature type="transmembrane region" description="Helical" evidence="2">
    <location>
        <begin position="336"/>
        <end position="356"/>
    </location>
</feature>
<feature type="topological domain" description="Cytoplasmic" evidence="2">
    <location>
        <begin position="357"/>
        <end position="372"/>
    </location>
</feature>
<feature type="transmembrane region" description="Helical" evidence="2">
    <location>
        <begin position="373"/>
        <end position="393"/>
    </location>
</feature>
<feature type="topological domain" description="Lumenal" evidence="2">
    <location>
        <begin position="394"/>
        <end position="402"/>
    </location>
</feature>
<feature type="transmembrane region" description="Helical" evidence="2">
    <location>
        <begin position="403"/>
        <end position="423"/>
    </location>
</feature>
<feature type="topological domain" description="Cytoplasmic" evidence="2">
    <location>
        <begin position="424"/>
        <end position="500"/>
    </location>
</feature>
<feature type="transmembrane region" description="Helical" evidence="2">
    <location>
        <begin position="501"/>
        <end position="521"/>
    </location>
</feature>
<feature type="topological domain" description="Lumenal" evidence="2">
    <location>
        <begin position="522"/>
        <end position="549"/>
    </location>
</feature>
<feature type="transmembrane region" description="Helical" evidence="2">
    <location>
        <begin position="550"/>
        <end position="570"/>
    </location>
</feature>
<feature type="topological domain" description="Cytoplasmic" evidence="2">
    <location>
        <begin position="571"/>
        <end position="737"/>
    </location>
</feature>
<feature type="repeat" description="ANK 1">
    <location>
        <begin position="97"/>
        <end position="126"/>
    </location>
</feature>
<feature type="repeat" description="ANK 2">
    <location>
        <begin position="131"/>
        <end position="160"/>
    </location>
</feature>
<feature type="repeat" description="ANK 3">
    <location>
        <begin position="164"/>
        <end position="193"/>
    </location>
</feature>
<feature type="repeat" description="ANK 4">
    <location>
        <begin position="197"/>
        <end position="226"/>
    </location>
</feature>
<feature type="repeat" description="ANK 5">
    <location>
        <begin position="230"/>
        <end position="259"/>
    </location>
</feature>
<feature type="domain" description="DHHC" evidence="3">
    <location>
        <begin position="456"/>
        <end position="506"/>
    </location>
</feature>
<feature type="region of interest" description="Disordered" evidence="4">
    <location>
        <begin position="1"/>
        <end position="60"/>
    </location>
</feature>
<feature type="compositionally biased region" description="Low complexity" evidence="4">
    <location>
        <begin position="7"/>
        <end position="38"/>
    </location>
</feature>
<feature type="active site" description="S-palmitoyl cysteine intermediate" evidence="1">
    <location>
        <position position="486"/>
    </location>
</feature>
<accession>Q5B0V6</accession>
<accession>C8V079</accession>
<proteinExistence type="inferred from homology"/>
<comment type="function">
    <text evidence="1">Palmitoyltransferase specific for casein kinase 1.</text>
</comment>
<comment type="catalytic activity">
    <reaction>
        <text>L-cysteinyl-[protein] + hexadecanoyl-CoA = S-hexadecanoyl-L-cysteinyl-[protein] + CoA</text>
        <dbReference type="Rhea" id="RHEA:36683"/>
        <dbReference type="Rhea" id="RHEA-COMP:10131"/>
        <dbReference type="Rhea" id="RHEA-COMP:11032"/>
        <dbReference type="ChEBI" id="CHEBI:29950"/>
        <dbReference type="ChEBI" id="CHEBI:57287"/>
        <dbReference type="ChEBI" id="CHEBI:57379"/>
        <dbReference type="ChEBI" id="CHEBI:74151"/>
        <dbReference type="EC" id="2.3.1.225"/>
    </reaction>
</comment>
<comment type="subcellular location">
    <subcellularLocation>
        <location>Early endosome membrane</location>
        <topology>Multi-pass membrane protein</topology>
    </subcellularLocation>
    <subcellularLocation>
        <location evidence="1">Golgi apparatus membrane</location>
        <topology evidence="1">Multi-pass membrane protein</topology>
    </subcellularLocation>
</comment>
<comment type="domain">
    <text evidence="1">The DHHC domain is required for palmitoyltransferase activity.</text>
</comment>
<comment type="similarity">
    <text evidence="5">Belongs to the DHHC palmitoyltransferase family. AKR/ZDHHC17 subfamily.</text>
</comment>
<comment type="sequence caution" evidence="5">
    <conflict type="erroneous gene model prediction">
        <sequence resource="EMBL-CDS" id="EAA58333"/>
    </conflict>
</comment>
<dbReference type="EC" id="2.3.1.225"/>
<dbReference type="EMBL" id="AACD01000100">
    <property type="protein sequence ID" value="EAA58333.1"/>
    <property type="status" value="ALT_SEQ"/>
    <property type="molecule type" value="Genomic_DNA"/>
</dbReference>
<dbReference type="EMBL" id="BN001301">
    <property type="protein sequence ID" value="CBF70774.1"/>
    <property type="molecule type" value="Genomic_DNA"/>
</dbReference>
<dbReference type="RefSeq" id="XP_663428.1">
    <property type="nucleotide sequence ID" value="XM_658336.1"/>
</dbReference>
<dbReference type="SMR" id="Q5B0V6"/>
<dbReference type="FunCoup" id="Q5B0V6">
    <property type="interactions" value="606"/>
</dbReference>
<dbReference type="STRING" id="227321.Q5B0V6"/>
<dbReference type="EnsemblFungi" id="CBF70774">
    <property type="protein sequence ID" value="CBF70774"/>
    <property type="gene ID" value="ANIA_05824"/>
</dbReference>
<dbReference type="VEuPathDB" id="FungiDB:AN5824"/>
<dbReference type="eggNOG" id="KOG0509">
    <property type="taxonomic scope" value="Eukaryota"/>
</dbReference>
<dbReference type="HOGENOM" id="CLU_012510_1_0_1"/>
<dbReference type="InParanoid" id="Q5B0V6"/>
<dbReference type="OMA" id="FWVGFRY"/>
<dbReference type="OrthoDB" id="6781668at2759"/>
<dbReference type="Proteomes" id="UP000000560">
    <property type="component" value="Chromosome I"/>
</dbReference>
<dbReference type="GO" id="GO:0031901">
    <property type="term" value="C:early endosome membrane"/>
    <property type="evidence" value="ECO:0007669"/>
    <property type="project" value="UniProtKB-SubCell"/>
</dbReference>
<dbReference type="GO" id="GO:0000139">
    <property type="term" value="C:Golgi membrane"/>
    <property type="evidence" value="ECO:0007669"/>
    <property type="project" value="UniProtKB-SubCell"/>
</dbReference>
<dbReference type="GO" id="GO:0019706">
    <property type="term" value="F:protein-cysteine S-palmitoyltransferase activity"/>
    <property type="evidence" value="ECO:0007669"/>
    <property type="project" value="UniProtKB-EC"/>
</dbReference>
<dbReference type="Gene3D" id="1.25.40.20">
    <property type="entry name" value="Ankyrin repeat-containing domain"/>
    <property type="match status" value="1"/>
</dbReference>
<dbReference type="InterPro" id="IPR002110">
    <property type="entry name" value="Ankyrin_rpt"/>
</dbReference>
<dbReference type="InterPro" id="IPR036770">
    <property type="entry name" value="Ankyrin_rpt-contain_sf"/>
</dbReference>
<dbReference type="InterPro" id="IPR001594">
    <property type="entry name" value="Palmitoyltrfase_DHHC"/>
</dbReference>
<dbReference type="PANTHER" id="PTHR24161">
    <property type="entry name" value="ANK_REP_REGION DOMAIN-CONTAINING PROTEIN-RELATED"/>
    <property type="match status" value="1"/>
</dbReference>
<dbReference type="PANTHER" id="PTHR24161:SF85">
    <property type="entry name" value="PALMITOYLTRANSFERASE HIP14"/>
    <property type="match status" value="1"/>
</dbReference>
<dbReference type="Pfam" id="PF12796">
    <property type="entry name" value="Ank_2"/>
    <property type="match status" value="2"/>
</dbReference>
<dbReference type="Pfam" id="PF01529">
    <property type="entry name" value="DHHC"/>
    <property type="match status" value="1"/>
</dbReference>
<dbReference type="SMART" id="SM00248">
    <property type="entry name" value="ANK"/>
    <property type="match status" value="5"/>
</dbReference>
<dbReference type="SUPFAM" id="SSF48403">
    <property type="entry name" value="Ankyrin repeat"/>
    <property type="match status" value="1"/>
</dbReference>
<dbReference type="PROSITE" id="PS50297">
    <property type="entry name" value="ANK_REP_REGION"/>
    <property type="match status" value="1"/>
</dbReference>
<dbReference type="PROSITE" id="PS50088">
    <property type="entry name" value="ANK_REPEAT"/>
    <property type="match status" value="4"/>
</dbReference>
<dbReference type="PROSITE" id="PS50216">
    <property type="entry name" value="DHHC"/>
    <property type="match status" value="1"/>
</dbReference>
<name>AKR1_EMENI</name>
<protein>
    <recommendedName>
        <fullName>Palmitoyltransferase akr1</fullName>
        <ecNumber>2.3.1.225</ecNumber>
    </recommendedName>
    <alternativeName>
        <fullName>Ankyrin repeat-containing protein akr1</fullName>
    </alternativeName>
</protein>
<sequence length="737" mass="81453">MSSGDPPSGLQASGSNSSAALGLSPPSAPSGKSAATPPKVATDDASVELSSMKSERSPAKSIPLGEDIMQVARIGEVSVMQKLFDEKKFTANYSDEEGITPLHWAAINNQYAMCKFLIDSGADVNAKGGESVATPAMWAAQRCHYYIVHLLLQYGADPLLTDVQGYNILHLATIDGNAFLLVLLLHQEIPVDVVDQQGHTGLMWAAYKGYPACVDLFLRWGANPNAVDDGGLAPLHWALVKGSLPCVLKILEYGADRFATTTDGKTPALVAQEMNTRHVWYRALSECGYDADGNRKVLPMGLGPYVRDKAIMSKFFFFWPFLLLFVVLWILSNMVVYFAIPVAAVAVFGLQWVAKKAASQGPSEFRIIQKTPFLAGVFAGSLFWVFVRYVLYVLPATYSTNPFLNLGFVVFFSLTTYFYFYSMVADPGYVPKLGSRNEQRAVIGQLFEEWKFDEENFCVYCMIRRPLRSKHCRRCSRCVAKHDHHCPWIDNCVGVNNLRQFVLYILCLEIGIILFLHLTFNYINGLPAPAEPICNILNDQICSFVLRDTFTLLLDVWIAIQLVWVTMLGVVQLVQVSRNQTTYENMRGHSLDRGHSSTRAFASAVTAGTTSLDAAGLSASGQGPNPALAQGGHRHRGGCLKQWSSLLGFDTFFATARDGLRDGPRAARPRNPFSRGIVTNCRDFWCDPAPYFGKREPGSAMLGGEIVNYNRMYETPSRMYSSGDYRSVAYDEAADIV</sequence>
<evidence type="ECO:0000250" key="1"/>
<evidence type="ECO:0000255" key="2"/>
<evidence type="ECO:0000255" key="3">
    <source>
        <dbReference type="PROSITE-ProRule" id="PRU00067"/>
    </source>
</evidence>
<evidence type="ECO:0000256" key="4">
    <source>
        <dbReference type="SAM" id="MobiDB-lite"/>
    </source>
</evidence>
<evidence type="ECO:0000305" key="5"/>
<gene>
    <name type="primary">akr1</name>
    <name type="ORF">AN5824</name>
</gene>
<keyword id="KW-0012">Acyltransferase</keyword>
<keyword id="KW-0040">ANK repeat</keyword>
<keyword id="KW-0967">Endosome</keyword>
<keyword id="KW-0333">Golgi apparatus</keyword>
<keyword id="KW-0449">Lipoprotein</keyword>
<keyword id="KW-0472">Membrane</keyword>
<keyword id="KW-0564">Palmitate</keyword>
<keyword id="KW-1185">Reference proteome</keyword>
<keyword id="KW-0677">Repeat</keyword>
<keyword id="KW-0808">Transferase</keyword>
<keyword id="KW-0812">Transmembrane</keyword>
<keyword id="KW-1133">Transmembrane helix</keyword>
<reference key="1">
    <citation type="journal article" date="2005" name="Nature">
        <title>Sequencing of Aspergillus nidulans and comparative analysis with A. fumigatus and A. oryzae.</title>
        <authorList>
            <person name="Galagan J.E."/>
            <person name="Calvo S.E."/>
            <person name="Cuomo C."/>
            <person name="Ma L.-J."/>
            <person name="Wortman J.R."/>
            <person name="Batzoglou S."/>
            <person name="Lee S.-I."/>
            <person name="Bastuerkmen M."/>
            <person name="Spevak C.C."/>
            <person name="Clutterbuck J."/>
            <person name="Kapitonov V."/>
            <person name="Jurka J."/>
            <person name="Scazzocchio C."/>
            <person name="Farman M.L."/>
            <person name="Butler J."/>
            <person name="Purcell S."/>
            <person name="Harris S."/>
            <person name="Braus G.H."/>
            <person name="Draht O."/>
            <person name="Busch S."/>
            <person name="D'Enfert C."/>
            <person name="Bouchier C."/>
            <person name="Goldman G.H."/>
            <person name="Bell-Pedersen D."/>
            <person name="Griffiths-Jones S."/>
            <person name="Doonan J.H."/>
            <person name="Yu J."/>
            <person name="Vienken K."/>
            <person name="Pain A."/>
            <person name="Freitag M."/>
            <person name="Selker E.U."/>
            <person name="Archer D.B."/>
            <person name="Penalva M.A."/>
            <person name="Oakley B.R."/>
            <person name="Momany M."/>
            <person name="Tanaka T."/>
            <person name="Kumagai T."/>
            <person name="Asai K."/>
            <person name="Machida M."/>
            <person name="Nierman W.C."/>
            <person name="Denning D.W."/>
            <person name="Caddick M.X."/>
            <person name="Hynes M."/>
            <person name="Paoletti M."/>
            <person name="Fischer R."/>
            <person name="Miller B.L."/>
            <person name="Dyer P.S."/>
            <person name="Sachs M.S."/>
            <person name="Osmani S.A."/>
            <person name="Birren B.W."/>
        </authorList>
    </citation>
    <scope>NUCLEOTIDE SEQUENCE [LARGE SCALE GENOMIC DNA]</scope>
    <source>
        <strain>FGSC A4 / ATCC 38163 / CBS 112.46 / NRRL 194 / M139</strain>
    </source>
</reference>
<reference key="2">
    <citation type="journal article" date="2009" name="Fungal Genet. Biol.">
        <title>The 2008 update of the Aspergillus nidulans genome annotation: a community effort.</title>
        <authorList>
            <person name="Wortman J.R."/>
            <person name="Gilsenan J.M."/>
            <person name="Joardar V."/>
            <person name="Deegan J."/>
            <person name="Clutterbuck J."/>
            <person name="Andersen M.R."/>
            <person name="Archer D."/>
            <person name="Bencina M."/>
            <person name="Braus G."/>
            <person name="Coutinho P."/>
            <person name="von Dohren H."/>
            <person name="Doonan J."/>
            <person name="Driessen A.J."/>
            <person name="Durek P."/>
            <person name="Espeso E."/>
            <person name="Fekete E."/>
            <person name="Flipphi M."/>
            <person name="Estrada C.G."/>
            <person name="Geysens S."/>
            <person name="Goldman G."/>
            <person name="de Groot P.W."/>
            <person name="Hansen K."/>
            <person name="Harris S.D."/>
            <person name="Heinekamp T."/>
            <person name="Helmstaedt K."/>
            <person name="Henrissat B."/>
            <person name="Hofmann G."/>
            <person name="Homan T."/>
            <person name="Horio T."/>
            <person name="Horiuchi H."/>
            <person name="James S."/>
            <person name="Jones M."/>
            <person name="Karaffa L."/>
            <person name="Karanyi Z."/>
            <person name="Kato M."/>
            <person name="Keller N."/>
            <person name="Kelly D.E."/>
            <person name="Kiel J.A."/>
            <person name="Kim J.M."/>
            <person name="van der Klei I.J."/>
            <person name="Klis F.M."/>
            <person name="Kovalchuk A."/>
            <person name="Krasevec N."/>
            <person name="Kubicek C.P."/>
            <person name="Liu B."/>
            <person name="Maccabe A."/>
            <person name="Meyer V."/>
            <person name="Mirabito P."/>
            <person name="Miskei M."/>
            <person name="Mos M."/>
            <person name="Mullins J."/>
            <person name="Nelson D.R."/>
            <person name="Nielsen J."/>
            <person name="Oakley B.R."/>
            <person name="Osmani S.A."/>
            <person name="Pakula T."/>
            <person name="Paszewski A."/>
            <person name="Paulsen I."/>
            <person name="Pilsyk S."/>
            <person name="Pocsi I."/>
            <person name="Punt P.J."/>
            <person name="Ram A.F."/>
            <person name="Ren Q."/>
            <person name="Robellet X."/>
            <person name="Robson G."/>
            <person name="Seiboth B."/>
            <person name="van Solingen P."/>
            <person name="Specht T."/>
            <person name="Sun J."/>
            <person name="Taheri-Talesh N."/>
            <person name="Takeshita N."/>
            <person name="Ussery D."/>
            <person name="vanKuyk P.A."/>
            <person name="Visser H."/>
            <person name="van de Vondervoort P.J."/>
            <person name="de Vries R.P."/>
            <person name="Walton J."/>
            <person name="Xiang X."/>
            <person name="Xiong Y."/>
            <person name="Zeng A.P."/>
            <person name="Brandt B.W."/>
            <person name="Cornell M.J."/>
            <person name="van den Hondel C.A."/>
            <person name="Visser J."/>
            <person name="Oliver S.G."/>
            <person name="Turner G."/>
        </authorList>
    </citation>
    <scope>GENOME REANNOTATION</scope>
    <source>
        <strain>FGSC A4 / ATCC 38163 / CBS 112.46 / NRRL 194 / M139</strain>
    </source>
</reference>
<organism>
    <name type="scientific">Emericella nidulans (strain FGSC A4 / ATCC 38163 / CBS 112.46 / NRRL 194 / M139)</name>
    <name type="common">Aspergillus nidulans</name>
    <dbReference type="NCBI Taxonomy" id="227321"/>
    <lineage>
        <taxon>Eukaryota</taxon>
        <taxon>Fungi</taxon>
        <taxon>Dikarya</taxon>
        <taxon>Ascomycota</taxon>
        <taxon>Pezizomycotina</taxon>
        <taxon>Eurotiomycetes</taxon>
        <taxon>Eurotiomycetidae</taxon>
        <taxon>Eurotiales</taxon>
        <taxon>Aspergillaceae</taxon>
        <taxon>Aspergillus</taxon>
        <taxon>Aspergillus subgen. Nidulantes</taxon>
    </lineage>
</organism>